<comment type="function">
    <text evidence="1">F(1)F(0) ATP synthase produces ATP from ADP in the presence of a proton or sodium gradient. F-type ATPases consist of two structural domains, F(1) containing the extramembraneous catalytic core and F(0) containing the membrane proton channel, linked together by a central stalk and a peripheral stalk. During catalysis, ATP synthesis in the catalytic domain of F(1) is coupled via a rotary mechanism of the central stalk subunits to proton translocation.</text>
</comment>
<comment type="function">
    <text evidence="1">Component of the F(0) channel, it forms part of the peripheral stalk, linking F(1) to F(0).</text>
</comment>
<comment type="subunit">
    <text evidence="1">F-type ATPases have 2 components, F(1) - the catalytic core - and F(0) - the membrane proton channel. F(1) has five subunits: alpha(3), beta(3), gamma(1), delta(1), epsilon(1). F(0) has four main subunits: a(1), b(1), b'(1) and c(10-14). The alpha and beta chains form an alternating ring which encloses part of the gamma chain. F(1) is attached to F(0) by a central stalk formed by the gamma and epsilon chains, while a peripheral stalk is formed by the delta, b and b' chains.</text>
</comment>
<comment type="subcellular location">
    <subcellularLocation>
        <location evidence="1">Plastid</location>
        <location evidence="1">Chloroplast thylakoid membrane</location>
        <topology evidence="1">Single-pass membrane protein</topology>
    </subcellularLocation>
</comment>
<comment type="miscellaneous">
    <text>In plastids the F-type ATPase is also known as CF(1)CF(0).</text>
</comment>
<comment type="similarity">
    <text evidence="1">Belongs to the ATPase B chain family.</text>
</comment>
<proteinExistence type="inferred from homology"/>
<name>ATPF_POPAL</name>
<evidence type="ECO:0000255" key="1">
    <source>
        <dbReference type="HAMAP-Rule" id="MF_01398"/>
    </source>
</evidence>
<sequence length="184" mass="20829">MKNITDSFVSLGHWSSAGSFGFNTDILATNPINLSVVLGVLIFFGKGVLSDLLDNRKQRILNTIRNSEELRGGAIEQLEKARARLRKVEIEADQFRVNGYSEIEREKLNLINSTYKTLEQLENYKNETIHFEQQRAINQVRQRVFQQALQGALGTLNSCLTNELHLRTISANIGMFGAMKEITN</sequence>
<organism>
    <name type="scientific">Populus alba</name>
    <name type="common">White poplar</name>
    <dbReference type="NCBI Taxonomy" id="43335"/>
    <lineage>
        <taxon>Eukaryota</taxon>
        <taxon>Viridiplantae</taxon>
        <taxon>Streptophyta</taxon>
        <taxon>Embryophyta</taxon>
        <taxon>Tracheophyta</taxon>
        <taxon>Spermatophyta</taxon>
        <taxon>Magnoliopsida</taxon>
        <taxon>eudicotyledons</taxon>
        <taxon>Gunneridae</taxon>
        <taxon>Pentapetalae</taxon>
        <taxon>rosids</taxon>
        <taxon>fabids</taxon>
        <taxon>Malpighiales</taxon>
        <taxon>Salicaceae</taxon>
        <taxon>Saliceae</taxon>
        <taxon>Populus</taxon>
    </lineage>
</organism>
<dbReference type="EMBL" id="AP008956">
    <property type="protein sequence ID" value="BAE97191.1"/>
    <property type="molecule type" value="Genomic_DNA"/>
</dbReference>
<dbReference type="RefSeq" id="YP_665544.1">
    <property type="nucleotide sequence ID" value="NC_008235.1"/>
</dbReference>
<dbReference type="SMR" id="Q14FH1"/>
<dbReference type="GeneID" id="4178221"/>
<dbReference type="KEGG" id="palz:4178221"/>
<dbReference type="OrthoDB" id="8423at3646"/>
<dbReference type="GO" id="GO:0009535">
    <property type="term" value="C:chloroplast thylakoid membrane"/>
    <property type="evidence" value="ECO:0007669"/>
    <property type="project" value="UniProtKB-SubCell"/>
</dbReference>
<dbReference type="GO" id="GO:0045259">
    <property type="term" value="C:proton-transporting ATP synthase complex"/>
    <property type="evidence" value="ECO:0007669"/>
    <property type="project" value="UniProtKB-KW"/>
</dbReference>
<dbReference type="GO" id="GO:0046933">
    <property type="term" value="F:proton-transporting ATP synthase activity, rotational mechanism"/>
    <property type="evidence" value="ECO:0007669"/>
    <property type="project" value="UniProtKB-UniRule"/>
</dbReference>
<dbReference type="CDD" id="cd06503">
    <property type="entry name" value="ATP-synt_Fo_b"/>
    <property type="match status" value="1"/>
</dbReference>
<dbReference type="HAMAP" id="MF_01398">
    <property type="entry name" value="ATP_synth_b_bprime"/>
    <property type="match status" value="1"/>
</dbReference>
<dbReference type="InterPro" id="IPR002146">
    <property type="entry name" value="ATP_synth_b/b'su_bac/chlpt"/>
</dbReference>
<dbReference type="PANTHER" id="PTHR34264">
    <property type="entry name" value="ATP SYNTHASE SUBUNIT B, CHLOROPLASTIC"/>
    <property type="match status" value="1"/>
</dbReference>
<dbReference type="PANTHER" id="PTHR34264:SF3">
    <property type="entry name" value="ATP SYNTHASE SUBUNIT B, CHLOROPLASTIC"/>
    <property type="match status" value="1"/>
</dbReference>
<dbReference type="Pfam" id="PF00430">
    <property type="entry name" value="ATP-synt_B"/>
    <property type="match status" value="1"/>
</dbReference>
<geneLocation type="chloroplast"/>
<keyword id="KW-0066">ATP synthesis</keyword>
<keyword id="KW-0138">CF(0)</keyword>
<keyword id="KW-0150">Chloroplast</keyword>
<keyword id="KW-0375">Hydrogen ion transport</keyword>
<keyword id="KW-0406">Ion transport</keyword>
<keyword id="KW-0472">Membrane</keyword>
<keyword id="KW-0934">Plastid</keyword>
<keyword id="KW-0793">Thylakoid</keyword>
<keyword id="KW-0812">Transmembrane</keyword>
<keyword id="KW-1133">Transmembrane helix</keyword>
<keyword id="KW-0813">Transport</keyword>
<reference key="1">
    <citation type="submission" date="2005-03" db="EMBL/GenBank/DDBJ databases">
        <title>Complete structure of the chloroplast genome of Populus alba.</title>
        <authorList>
            <person name="Okumura S."/>
            <person name="Yamashita A."/>
            <person name="Kanamoto H."/>
            <person name="Hattori M."/>
            <person name="Takase H."/>
            <person name="Tomizawa K."/>
        </authorList>
    </citation>
    <scope>NUCLEOTIDE SEQUENCE [LARGE SCALE GENOMIC DNA]</scope>
</reference>
<protein>
    <recommendedName>
        <fullName evidence="1">ATP synthase subunit b, chloroplastic</fullName>
    </recommendedName>
    <alternativeName>
        <fullName evidence="1">ATP synthase F(0) sector subunit b</fullName>
    </alternativeName>
    <alternativeName>
        <fullName evidence="1">ATPase subunit I</fullName>
    </alternativeName>
</protein>
<accession>Q14FH1</accession>
<gene>
    <name evidence="1" type="primary">atpF</name>
</gene>
<feature type="chain" id="PRO_0000368973" description="ATP synthase subunit b, chloroplastic">
    <location>
        <begin position="1"/>
        <end position="184"/>
    </location>
</feature>
<feature type="transmembrane region" description="Helical" evidence="1">
    <location>
        <begin position="27"/>
        <end position="49"/>
    </location>
</feature>